<keyword id="KW-0240">DNA-directed RNA polymerase</keyword>
<keyword id="KW-0548">Nucleotidyltransferase</keyword>
<keyword id="KW-1185">Reference proteome</keyword>
<keyword id="KW-0804">Transcription</keyword>
<keyword id="KW-0808">Transferase</keyword>
<dbReference type="EC" id="2.7.7.6" evidence="1"/>
<dbReference type="EMBL" id="CP001251">
    <property type="protein sequence ID" value="ACK42716.1"/>
    <property type="molecule type" value="Genomic_DNA"/>
</dbReference>
<dbReference type="RefSeq" id="WP_012583794.1">
    <property type="nucleotide sequence ID" value="NC_011661.1"/>
</dbReference>
<dbReference type="RefSeq" id="YP_002353330.1">
    <property type="nucleotide sequence ID" value="NC_011661.1"/>
</dbReference>
<dbReference type="SMR" id="B8E0X9"/>
<dbReference type="STRING" id="515635.Dtur_1442"/>
<dbReference type="EnsemblBacteria" id="ACK42716">
    <property type="protein sequence ID" value="ACK42716"/>
    <property type="gene ID" value="Dtur_1442"/>
</dbReference>
<dbReference type="KEGG" id="dtu:Dtur_1442"/>
<dbReference type="eggNOG" id="COG1758">
    <property type="taxonomic scope" value="Bacteria"/>
</dbReference>
<dbReference type="HOGENOM" id="CLU_2805555_0_0_0"/>
<dbReference type="InParanoid" id="B8E0X9"/>
<dbReference type="OrthoDB" id="9815459at2"/>
<dbReference type="Proteomes" id="UP000007719">
    <property type="component" value="Chromosome"/>
</dbReference>
<dbReference type="GO" id="GO:0000345">
    <property type="term" value="C:cytosolic DNA-directed RNA polymerase complex"/>
    <property type="evidence" value="ECO:0000318"/>
    <property type="project" value="GO_Central"/>
</dbReference>
<dbReference type="GO" id="GO:0001000">
    <property type="term" value="F:bacterial-type RNA polymerase core enzyme binding"/>
    <property type="evidence" value="ECO:0000318"/>
    <property type="project" value="GO_Central"/>
</dbReference>
<dbReference type="GO" id="GO:0003677">
    <property type="term" value="F:DNA binding"/>
    <property type="evidence" value="ECO:0007669"/>
    <property type="project" value="UniProtKB-UniRule"/>
</dbReference>
<dbReference type="GO" id="GO:0003899">
    <property type="term" value="F:DNA-directed RNA polymerase activity"/>
    <property type="evidence" value="ECO:0007669"/>
    <property type="project" value="UniProtKB-UniRule"/>
</dbReference>
<dbReference type="GO" id="GO:0006352">
    <property type="term" value="P:DNA-templated transcription initiation"/>
    <property type="evidence" value="ECO:0000318"/>
    <property type="project" value="GO_Central"/>
</dbReference>
<dbReference type="Gene3D" id="3.90.940.10">
    <property type="match status" value="1"/>
</dbReference>
<dbReference type="HAMAP" id="MF_00366">
    <property type="entry name" value="RNApol_bact_RpoZ"/>
    <property type="match status" value="1"/>
</dbReference>
<dbReference type="InterPro" id="IPR003716">
    <property type="entry name" value="DNA-dir_RNA_pol_omega"/>
</dbReference>
<dbReference type="InterPro" id="IPR006110">
    <property type="entry name" value="Pol_omega/Rpo6/RPB6"/>
</dbReference>
<dbReference type="InterPro" id="IPR036161">
    <property type="entry name" value="RPB6/omega-like_sf"/>
</dbReference>
<dbReference type="NCBIfam" id="TIGR00690">
    <property type="entry name" value="rpoZ"/>
    <property type="match status" value="1"/>
</dbReference>
<dbReference type="PANTHER" id="PTHR34476">
    <property type="entry name" value="DNA-DIRECTED RNA POLYMERASE SUBUNIT OMEGA"/>
    <property type="match status" value="1"/>
</dbReference>
<dbReference type="PANTHER" id="PTHR34476:SF1">
    <property type="entry name" value="DNA-DIRECTED RNA POLYMERASE SUBUNIT OMEGA"/>
    <property type="match status" value="1"/>
</dbReference>
<dbReference type="Pfam" id="PF01192">
    <property type="entry name" value="RNA_pol_Rpb6"/>
    <property type="match status" value="1"/>
</dbReference>
<dbReference type="SMART" id="SM01409">
    <property type="entry name" value="RNA_pol_Rpb6"/>
    <property type="match status" value="1"/>
</dbReference>
<dbReference type="SUPFAM" id="SSF63562">
    <property type="entry name" value="RPB6/omega subunit-like"/>
    <property type="match status" value="1"/>
</dbReference>
<gene>
    <name evidence="1" type="primary">rpoZ</name>
    <name type="ordered locus">Dtur_1442</name>
</gene>
<sequence>MKEVNIDTLISKIPNKYVLTVVISKRARQLFEELKFLKTIARDPLILAMEEIAQEKIAYGEGDDLED</sequence>
<organism>
    <name type="scientific">Dictyoglomus turgidum (strain DSM 6724 / Z-1310)</name>
    <dbReference type="NCBI Taxonomy" id="515635"/>
    <lineage>
        <taxon>Bacteria</taxon>
        <taxon>Pseudomonadati</taxon>
        <taxon>Dictyoglomota</taxon>
        <taxon>Dictyoglomia</taxon>
        <taxon>Dictyoglomales</taxon>
        <taxon>Dictyoglomaceae</taxon>
        <taxon>Dictyoglomus</taxon>
    </lineage>
</organism>
<protein>
    <recommendedName>
        <fullName evidence="1">DNA-directed RNA polymerase subunit omega</fullName>
        <shortName evidence="1">RNAP omega subunit</shortName>
        <ecNumber evidence="1">2.7.7.6</ecNumber>
    </recommendedName>
    <alternativeName>
        <fullName evidence="1">RNA polymerase omega subunit</fullName>
    </alternativeName>
    <alternativeName>
        <fullName evidence="1">Transcriptase subunit omega</fullName>
    </alternativeName>
</protein>
<feature type="chain" id="PRO_1000121214" description="DNA-directed RNA polymerase subunit omega">
    <location>
        <begin position="1"/>
        <end position="67"/>
    </location>
</feature>
<evidence type="ECO:0000255" key="1">
    <source>
        <dbReference type="HAMAP-Rule" id="MF_00366"/>
    </source>
</evidence>
<proteinExistence type="inferred from homology"/>
<name>RPOZ_DICTD</name>
<accession>B8E0X9</accession>
<reference key="1">
    <citation type="journal article" date="2016" name="Front. Microbiol.">
        <title>The complete genome sequence of hyperthermophile Dictyoglomus turgidum DSM 6724 reveals a specialized carbohydrate fermentor.</title>
        <authorList>
            <person name="Brumm P.J."/>
            <person name="Gowda K."/>
            <person name="Robb F.T."/>
            <person name="Mead D.A."/>
        </authorList>
    </citation>
    <scope>NUCLEOTIDE SEQUENCE [LARGE SCALE GENOMIC DNA]</scope>
    <source>
        <strain>DSM 6724 / Z-1310</strain>
    </source>
</reference>
<comment type="function">
    <text evidence="1">Promotes RNA polymerase assembly. Latches the N- and C-terminal regions of the beta' subunit thereby facilitating its interaction with the beta and alpha subunits.</text>
</comment>
<comment type="catalytic activity">
    <reaction evidence="1">
        <text>RNA(n) + a ribonucleoside 5'-triphosphate = RNA(n+1) + diphosphate</text>
        <dbReference type="Rhea" id="RHEA:21248"/>
        <dbReference type="Rhea" id="RHEA-COMP:14527"/>
        <dbReference type="Rhea" id="RHEA-COMP:17342"/>
        <dbReference type="ChEBI" id="CHEBI:33019"/>
        <dbReference type="ChEBI" id="CHEBI:61557"/>
        <dbReference type="ChEBI" id="CHEBI:140395"/>
        <dbReference type="EC" id="2.7.7.6"/>
    </reaction>
</comment>
<comment type="subunit">
    <text evidence="1">The RNAP catalytic core consists of 2 alpha, 1 beta, 1 beta' and 1 omega subunit. When a sigma factor is associated with the core the holoenzyme is formed, which can initiate transcription.</text>
</comment>
<comment type="similarity">
    <text evidence="1">Belongs to the RNA polymerase subunit omega family.</text>
</comment>